<dbReference type="PDB" id="1Q2J">
    <property type="method" value="NMR"/>
    <property type="chains" value="A=8-28"/>
</dbReference>
<dbReference type="PDBsum" id="1Q2J"/>
<dbReference type="SMR" id="P60207"/>
<dbReference type="ConoServer" id="1629">
    <property type="toxin name" value="SmIIIA precursor"/>
</dbReference>
<dbReference type="EvolutionaryTrace" id="P60207"/>
<dbReference type="GO" id="GO:0005576">
    <property type="term" value="C:extracellular region"/>
    <property type="evidence" value="ECO:0007669"/>
    <property type="project" value="UniProtKB-SubCell"/>
</dbReference>
<dbReference type="GO" id="GO:0019871">
    <property type="term" value="F:sodium channel inhibitor activity"/>
    <property type="evidence" value="ECO:0007669"/>
    <property type="project" value="InterPro"/>
</dbReference>
<dbReference type="GO" id="GO:0090729">
    <property type="term" value="F:toxin activity"/>
    <property type="evidence" value="ECO:0007669"/>
    <property type="project" value="UniProtKB-KW"/>
</dbReference>
<dbReference type="InterPro" id="IPR008036">
    <property type="entry name" value="Conotoxin_mu-typ"/>
</dbReference>
<dbReference type="PROSITE" id="PS60013">
    <property type="entry name" value="MU_CONOTOXIN"/>
    <property type="match status" value="1"/>
</dbReference>
<keyword id="KW-0002">3D-structure</keyword>
<keyword id="KW-0027">Amidation</keyword>
<keyword id="KW-0165">Cleavage on pair of basic residues</keyword>
<keyword id="KW-1015">Disulfide bond</keyword>
<keyword id="KW-0872">Ion channel impairing toxin</keyword>
<keyword id="KW-0528">Neurotoxin</keyword>
<keyword id="KW-0873">Pyrrolidone carboxylic acid</keyword>
<keyword id="KW-0964">Secreted</keyword>
<keyword id="KW-0800">Toxin</keyword>
<keyword id="KW-0738">Voltage-gated sodium channel impairing toxin</keyword>
<comment type="function">
    <text evidence="1 3 4 5">Mu-conotoxins block voltage-gated sodium channels (Nav). This toxin blocks rNav1.5/SCN5A (IC(50) is 1.3 uM), rNav1.6/SCN8A (IC(50) is 160 nM), rNav1.7/SCN9A (IC(50) is 1.3 uM), rNav1.1/SCN1A (K(d) is 3.8 nM), rNav1.2/SCN2A (K(d) is 1.3 nM), rNav1.4/SCN4A (K(d) is 0.22 nM), rNav1.6/SCN8A (K(d) is 69 nM), and rNav1.7/SCN9A (K(d) is 260 nM). This toxin is very potent but weakly discriminating among sodium channels. The block of these channels is modified when beta-subunits are coexpressed with alpha subunits. Hence, blocks of channels containing beta-1 and beta-3 subunits are more potent (compared to channels without beta subunits), whereas blocks of channels containing beta-2 and beta-4 subunits are less potent (compared to channels without beta subunits).</text>
</comment>
<comment type="subcellular location">
    <subcellularLocation>
        <location>Secreted</location>
    </subcellularLocation>
</comment>
<comment type="tissue specificity">
    <text>Expressed by the venom duct.</text>
</comment>
<comment type="domain">
    <text>The cysteine framework is III (CC-C-C-CC). Classified in the M-5 branch, since 5 residues stand between the fourth and the fifth cysteine residues.</text>
</comment>
<comment type="PTM">
    <text>SmIIIA' is a putative isoform where the N-terminal AA is missing.</text>
</comment>
<comment type="miscellaneous">
    <text evidence="8">All peptide bonds in this toxin adopt the trans conformation.</text>
</comment>
<comment type="miscellaneous">
    <text evidence="9">Negative results: does not show activity on rNav1.8/SCN10A (IC(50) is &gt;10 uM).</text>
</comment>
<comment type="similarity">
    <text evidence="7">Belongs to the conotoxin M superfamily.</text>
</comment>
<comment type="online information" name="Biological Magnetic Resonance Data Bank">
    <link uri="https://bmrb.io/data_library/summary/index.php?bmrbId=5881"/>
    <text>Mu-conotoxin SmIIIA entry</text>
</comment>
<evidence type="ECO:0000269" key="1">
    <source>
    </source>
</evidence>
<evidence type="ECO:0000269" key="2">
    <source>
    </source>
</evidence>
<evidence type="ECO:0000269" key="3">
    <source>
    </source>
</evidence>
<evidence type="ECO:0000269" key="4">
    <source>
    </source>
</evidence>
<evidence type="ECO:0000269" key="5">
    <source>
    </source>
</evidence>
<evidence type="ECO:0000303" key="6">
    <source>
    </source>
</evidence>
<evidence type="ECO:0000305" key="7"/>
<evidence type="ECO:0000305" key="8">
    <source>
    </source>
</evidence>
<evidence type="ECO:0000305" key="9">
    <source>
    </source>
</evidence>
<evidence type="ECO:0007829" key="10">
    <source>
        <dbReference type="PDB" id="1Q2J"/>
    </source>
</evidence>
<organism>
    <name type="scientific">Conus stercusmuscarum</name>
    <name type="common">Fly-specked cone</name>
    <dbReference type="NCBI Taxonomy" id="89452"/>
    <lineage>
        <taxon>Eukaryota</taxon>
        <taxon>Metazoa</taxon>
        <taxon>Spiralia</taxon>
        <taxon>Lophotrochozoa</taxon>
        <taxon>Mollusca</taxon>
        <taxon>Gastropoda</taxon>
        <taxon>Caenogastropoda</taxon>
        <taxon>Neogastropoda</taxon>
        <taxon>Conoidea</taxon>
        <taxon>Conidae</taxon>
        <taxon>Conus</taxon>
        <taxon>Pionoconus</taxon>
    </lineage>
</organism>
<accession>P60207</accession>
<proteinExistence type="evidence at transcript level"/>
<reference key="1">
    <citation type="journal article" date="2002" name="Biochemistry">
        <title>Mu-conotoxin SmIIIA, a potent inhibitor of tetrodotoxin-resistant sodium channels in amphibian sympathetic and sensory neurons.</title>
        <authorList>
            <person name="West P.J."/>
            <person name="Bulaj G."/>
            <person name="Garrett J.E."/>
            <person name="Olivera B.M."/>
            <person name="Yoshikami D."/>
        </authorList>
    </citation>
    <scope>NUCLEOTIDE SEQUENCE [MRNA]</scope>
    <scope>FUNCTION ON TTX-RESISTANT SODIUM CHANNELS</scope>
    <scope>SYNTHESIS OF 7-28</scope>
    <scope>SYNTHESIS OF 8-28</scope>
    <source>
        <tissue>Venom duct</tissue>
    </source>
</reference>
<reference key="2">
    <citation type="journal article" date="2011" name="Proc. Natl. Acad. Sci. U.S.A.">
        <title>mu-Conotoxins that differentially block sodium channels Nav1.1 through 1.8 identify those responsible for action potentials in sciatic nerve.</title>
        <authorList>
            <person name="Wilson M.J."/>
            <person name="Yoshikami D."/>
            <person name="Azam L."/>
            <person name="Gajewiak J."/>
            <person name="Olivera B.M."/>
            <person name="Bulaj G."/>
            <person name="Zhang M.M."/>
        </authorList>
    </citation>
    <scope>FUNCTION ON SODIUM CHANNELS</scope>
    <scope>SYNTHESIS OF 7-28</scope>
</reference>
<reference key="3">
    <citation type="journal article" date="2012" name="Br. J. Pharmacol.">
        <title>A novel u-conopeptide, CnIIIC, exerts potent and preferential inhibition of NaV1.2/1.4 channels and blocks neuronal nicotinic acetylcholine receptors.</title>
        <authorList>
            <person name="Favreau P."/>
            <person name="Benoit E."/>
            <person name="Hocking H.G."/>
            <person name="Carlier L."/>
            <person name="D'Hoedt D."/>
            <person name="Leipold E."/>
            <person name="Markgraf R."/>
            <person name="Schlumberger S."/>
            <person name="Cordova M.A."/>
            <person name="Gaertner H."/>
            <person name="Paolini-Bertrand M."/>
            <person name="Hartley O."/>
            <person name="Tytgat J."/>
            <person name="Heinemann S.H."/>
            <person name="Bertrand D."/>
            <person name="Boelens R."/>
            <person name="Stocklin R."/>
            <person name="Molgo J."/>
        </authorList>
    </citation>
    <scope>FUNCTION</scope>
    <scope>SYNTHESIS OF 7-28</scope>
</reference>
<reference key="4">
    <citation type="journal article" date="2013" name="Br. J. Pharmacol.">
        <title>Co-expression of Na(V)beta subunits alters the kinetics of inhibition of voltage-gated sodium channels by pore-blocking mu-conotoxins.</title>
        <authorList>
            <person name="Zhang M.M."/>
            <person name="Wilson M.J."/>
            <person name="Azam L."/>
            <person name="Gajewiak J."/>
            <person name="Rivier J.E."/>
            <person name="Bulaj G."/>
            <person name="Olivera B.M."/>
            <person name="Yoshikami D."/>
        </authorList>
    </citation>
    <scope>FUNCTION ON SODIUM CHANNELS</scope>
    <scope>SYNTHESIS OF 7-28</scope>
</reference>
<reference key="5">
    <citation type="journal article" date="2003" name="J. Biol. Chem.">
        <title>Structural basis for tetrodotoxin-resistant sodium channel binding by mu-conotoxin SmIIIA.</title>
        <authorList>
            <person name="Keizer D.W."/>
            <person name="West P.J."/>
            <person name="Lee E.F."/>
            <person name="Yoshikami D."/>
            <person name="Olivera B.M."/>
            <person name="Bulaj G."/>
            <person name="Norton R.S."/>
        </authorList>
    </citation>
    <scope>STRUCTURE BY NMR OF 7-28</scope>
    <scope>PYROGLUTAMATE FORMATION AT GLN-7</scope>
    <scope>AMIDATION AT CYS-28</scope>
    <scope>SYNTHESIS OF 7-28</scope>
    <scope>DISULFIDE BONDS</scope>
</reference>
<protein>
    <recommendedName>
        <fullName evidence="6">Mu-conotoxin SmIIIA</fullName>
    </recommendedName>
</protein>
<feature type="propeptide" id="PRO_0000035055" evidence="7">
    <location>
        <begin position="1" status="less than"/>
        <end position="6"/>
    </location>
</feature>
<feature type="peptide" id="PRO_0000035056" description="Mu-conotoxin SmIIIA" evidence="8">
    <location>
        <begin position="7"/>
        <end position="28"/>
    </location>
</feature>
<feature type="modified residue" description="Pyrrolidone carboxylic acid" evidence="8">
    <location>
        <position position="7"/>
    </location>
</feature>
<feature type="modified residue" description="Cysteine amide" evidence="8">
    <location>
        <position position="28"/>
    </location>
</feature>
<feature type="disulfide bond" evidence="2">
    <location>
        <begin position="9"/>
        <end position="21"/>
    </location>
</feature>
<feature type="disulfide bond" evidence="2">
    <location>
        <begin position="10"/>
        <end position="27"/>
    </location>
</feature>
<feature type="disulfide bond" evidence="2">
    <location>
        <begin position="16"/>
        <end position="28"/>
    </location>
</feature>
<feature type="non-terminal residue">
    <location>
        <position position="1"/>
    </location>
</feature>
<feature type="strand" evidence="10">
    <location>
        <begin position="11"/>
        <end position="14"/>
    </location>
</feature>
<feature type="strand" evidence="10">
    <location>
        <begin position="18"/>
        <end position="26"/>
    </location>
</feature>
<sequence>PLFDKRQRCCNGRRGCSSRWCRDHSRCCGRR</sequence>
<name>CM3A_CONSE</name>